<accession>Q9NS68</accession>
<accession>A8KA09</accession>
<accession>A8KA26</accession>
<accession>B1AM40</accession>
<accession>B1AM41</accession>
<accession>B4E2I6</accession>
<accession>Q9BXZ9</accession>
<accession>Q9BY00</accession>
<accession>Q9NZV2</accession>
<name>TNR19_HUMAN</name>
<gene>
    <name type="primary">TNFRSF19</name>
    <name type="synonym">TAJ</name>
    <name type="synonym">TROY</name>
    <name type="ORF">UNQ1888/PRO4333</name>
</gene>
<proteinExistence type="evidence at protein level"/>
<evidence type="ECO:0000255" key="1"/>
<evidence type="ECO:0000255" key="2">
    <source>
        <dbReference type="PROSITE-ProRule" id="PRU00206"/>
    </source>
</evidence>
<evidence type="ECO:0000269" key="3">
    <source>
    </source>
</evidence>
<evidence type="ECO:0000269" key="4">
    <source>
    </source>
</evidence>
<evidence type="ECO:0000269" key="5">
    <source>
    </source>
</evidence>
<evidence type="ECO:0000269" key="6">
    <source>
    </source>
</evidence>
<evidence type="ECO:0000269" key="7">
    <source ref="3"/>
</evidence>
<evidence type="ECO:0000303" key="8">
    <source>
    </source>
</evidence>
<evidence type="ECO:0000303" key="9">
    <source>
    </source>
</evidence>
<evidence type="ECO:0000303" key="10">
    <source>
    </source>
</evidence>
<evidence type="ECO:0000303" key="11">
    <source ref="3"/>
</evidence>
<evidence type="ECO:0000305" key="12"/>
<organism>
    <name type="scientific">Homo sapiens</name>
    <name type="common">Human</name>
    <dbReference type="NCBI Taxonomy" id="9606"/>
    <lineage>
        <taxon>Eukaryota</taxon>
        <taxon>Metazoa</taxon>
        <taxon>Chordata</taxon>
        <taxon>Craniata</taxon>
        <taxon>Vertebrata</taxon>
        <taxon>Euteleostomi</taxon>
        <taxon>Mammalia</taxon>
        <taxon>Eutheria</taxon>
        <taxon>Euarchontoglires</taxon>
        <taxon>Primates</taxon>
        <taxon>Haplorrhini</taxon>
        <taxon>Catarrhini</taxon>
        <taxon>Hominidae</taxon>
        <taxon>Homo</taxon>
    </lineage>
</organism>
<protein>
    <recommendedName>
        <fullName>Tumor necrosis factor receptor superfamily member 19</fullName>
    </recommendedName>
    <alternativeName>
        <fullName>TRADE</fullName>
    </alternativeName>
    <alternativeName>
        <fullName>Toxicity and JNK inducer</fullName>
    </alternativeName>
</protein>
<sequence>MALKVLLEQEKTFFTLLVLLGYLSCKVTCESGDCRQQEFRDRSGNCVPCNQCGPGMELSKECGFGYGEDAQCVTCRLHRFKEDWGFQKCKPCLDCAVVNRFQKANCSATSDAICGDCLPGFYRKTKLVGFQDMECVPCGDPPPPYEPHCASKVNLVKIASTASSPRDTALAAVICSALATVLLALLILCVIYCKRQFMEKKPSWSLRSQDIQYNGSELSCFDRPQLHEYAHRACCQCRRDSVQTCGPVRLLPSMCCEEACSPNPATLGCGVHSAASLQARNAGPAGEMVPTFFGSLTQSICGEFSDAWPLMQNPMGGDNISFCDSYPELTGEDIHSLNPELESSTSLDSNSSQDLVGGAVPVQSHSENFTAATDLSRYNNTLVESASTQDALTMRSQLDQESGAVIHPATQTSLQVRQRLGSL</sequence>
<feature type="signal peptide" evidence="5">
    <location>
        <begin position="1"/>
        <end position="29"/>
    </location>
</feature>
<feature type="chain" id="PRO_0000034597" description="Tumor necrosis factor receptor superfamily member 19">
    <location>
        <begin position="30"/>
        <end position="423"/>
    </location>
</feature>
<feature type="topological domain" description="Extracellular" evidence="1">
    <location>
        <begin position="30"/>
        <end position="170"/>
    </location>
</feature>
<feature type="transmembrane region" description="Helical" evidence="1">
    <location>
        <begin position="171"/>
        <end position="191"/>
    </location>
</feature>
<feature type="topological domain" description="Cytoplasmic" evidence="1">
    <location>
        <begin position="192"/>
        <end position="423"/>
    </location>
</feature>
<feature type="repeat" description="TNFR-Cys 1">
    <location>
        <begin position="33"/>
        <end position="72"/>
    </location>
</feature>
<feature type="repeat" description="TNFR-Cys 2">
    <location>
        <begin position="74"/>
        <end position="114"/>
    </location>
</feature>
<feature type="repeat" description="TNFR-Cys 3">
    <location>
        <begin position="116"/>
        <end position="149"/>
    </location>
</feature>
<feature type="glycosylation site" description="N-linked (GlcNAc...) asparagine" evidence="1">
    <location>
        <position position="105"/>
    </location>
</feature>
<feature type="disulfide bond" evidence="2">
    <location>
        <begin position="34"/>
        <end position="46"/>
    </location>
</feature>
<feature type="disulfide bond" evidence="2">
    <location>
        <begin position="49"/>
        <end position="62"/>
    </location>
</feature>
<feature type="disulfide bond" evidence="2">
    <location>
        <begin position="52"/>
        <end position="72"/>
    </location>
</feature>
<feature type="disulfide bond" evidence="2">
    <location>
        <begin position="75"/>
        <end position="89"/>
    </location>
</feature>
<feature type="disulfide bond" evidence="2">
    <location>
        <begin position="92"/>
        <end position="106"/>
    </location>
</feature>
<feature type="disulfide bond" evidence="2">
    <location>
        <begin position="95"/>
        <end position="114"/>
    </location>
</feature>
<feature type="disulfide bond" evidence="2">
    <location>
        <begin position="117"/>
        <end position="135"/>
    </location>
</feature>
<feature type="disulfide bond" evidence="2">
    <location>
        <begin position="138"/>
        <end position="149"/>
    </location>
</feature>
<feature type="splice variant" id="VSP_044886" description="In isoform 3." evidence="9">
    <location>
        <begin position="1"/>
        <end position="132"/>
    </location>
</feature>
<feature type="splice variant" id="VSP_006512" description="In isoform 2 and isoform 3." evidence="8 9 10 11">
    <original>VRQRLGSL</original>
    <variation>EA</variation>
    <location>
        <begin position="416"/>
        <end position="423"/>
    </location>
</feature>
<feature type="sequence variant" id="VAR_024278" description="In dbSNP:rs9550987." evidence="7">
    <original>S</original>
    <variation>T</variation>
    <location>
        <position position="31"/>
    </location>
</feature>
<feature type="sequence variant" id="VAR_070812" description="In dbSNP:rs61756242." evidence="4">
    <original>A</original>
    <variation>V</variation>
    <location>
        <position position="159"/>
    </location>
</feature>
<feature type="sequence variant" id="VAR_024279" description="In dbSNP:rs3751362." evidence="4 7">
    <original>V</original>
    <variation>I</variation>
    <location>
        <position position="405"/>
    </location>
</feature>
<feature type="sequence conflict" description="In Ref. 1; AAF71828." evidence="12" ref="1">
    <original>T</original>
    <variation>A</variation>
    <location>
        <position position="74"/>
    </location>
</feature>
<feature type="sequence conflict" description="In Ref. 1; AAF71828." evidence="12" ref="1">
    <original>GS</original>
    <variation>ET</variation>
    <location>
        <begin position="215"/>
        <end position="216"/>
    </location>
</feature>
<feature type="sequence conflict" description="In Ref. 3; AAK28396." evidence="12" ref="3">
    <original>F</original>
    <variation>L</variation>
    <location>
        <position position="221"/>
    </location>
</feature>
<feature type="sequence conflict" description="In Ref. 3; AAK28396." evidence="12" ref="3">
    <original>T</original>
    <variation>A</variation>
    <location>
        <position position="330"/>
    </location>
</feature>
<dbReference type="EMBL" id="AF167555">
    <property type="protein sequence ID" value="AAF71828.1"/>
    <property type="molecule type" value="mRNA"/>
</dbReference>
<dbReference type="EMBL" id="AB040434">
    <property type="protein sequence ID" value="BAB03269.1"/>
    <property type="molecule type" value="mRNA"/>
</dbReference>
<dbReference type="EMBL" id="AF246998">
    <property type="protein sequence ID" value="AAK28395.1"/>
    <property type="molecule type" value="mRNA"/>
</dbReference>
<dbReference type="EMBL" id="AF246999">
    <property type="protein sequence ID" value="AAK28396.1"/>
    <property type="molecule type" value="mRNA"/>
</dbReference>
<dbReference type="EMBL" id="AY358888">
    <property type="protein sequence ID" value="AAQ89247.1"/>
    <property type="molecule type" value="mRNA"/>
</dbReference>
<dbReference type="EMBL" id="AK292874">
    <property type="protein sequence ID" value="BAF85563.1"/>
    <property type="molecule type" value="mRNA"/>
</dbReference>
<dbReference type="EMBL" id="AK292891">
    <property type="protein sequence ID" value="BAF85580.1"/>
    <property type="molecule type" value="mRNA"/>
</dbReference>
<dbReference type="EMBL" id="AK304290">
    <property type="protein sequence ID" value="BAG65148.1"/>
    <property type="molecule type" value="mRNA"/>
</dbReference>
<dbReference type="EMBL" id="AL161422">
    <property type="status" value="NOT_ANNOTATED_CDS"/>
    <property type="molecule type" value="Genomic_DNA"/>
</dbReference>
<dbReference type="EMBL" id="AL354815">
    <property type="status" value="NOT_ANNOTATED_CDS"/>
    <property type="molecule type" value="Genomic_DNA"/>
</dbReference>
<dbReference type="EMBL" id="CH471075">
    <property type="protein sequence ID" value="EAX08326.1"/>
    <property type="molecule type" value="Genomic_DNA"/>
</dbReference>
<dbReference type="EMBL" id="BC047321">
    <property type="protein sequence ID" value="AAH47321.1"/>
    <property type="molecule type" value="mRNA"/>
</dbReference>
<dbReference type="CCDS" id="CCDS55893.1">
    <molecule id="Q9NS68-3"/>
</dbReference>
<dbReference type="CCDS" id="CCDS9301.1">
    <molecule id="Q9NS68-2"/>
</dbReference>
<dbReference type="CCDS" id="CCDS9302.1">
    <molecule id="Q9NS68-1"/>
</dbReference>
<dbReference type="RefSeq" id="NP_001191387.1">
    <molecule id="Q9NS68-2"/>
    <property type="nucleotide sequence ID" value="NM_001204458.3"/>
</dbReference>
<dbReference type="RefSeq" id="NP_001191388.1">
    <molecule id="Q9NS68-3"/>
    <property type="nucleotide sequence ID" value="NM_001204459.2"/>
</dbReference>
<dbReference type="RefSeq" id="NP_061117.2">
    <molecule id="Q9NS68-1"/>
    <property type="nucleotide sequence ID" value="NM_018647.3"/>
</dbReference>
<dbReference type="RefSeq" id="NP_683760.1">
    <molecule id="Q9NS68-2"/>
    <property type="nucleotide sequence ID" value="NM_148957.4"/>
</dbReference>
<dbReference type="RefSeq" id="XP_005266502.1">
    <property type="nucleotide sequence ID" value="XM_005266445.2"/>
</dbReference>
<dbReference type="RefSeq" id="XP_011533448.1">
    <property type="nucleotide sequence ID" value="XM_011535146.1"/>
</dbReference>
<dbReference type="RefSeq" id="XP_016876140.1">
    <property type="nucleotide sequence ID" value="XM_017020651.1"/>
</dbReference>
<dbReference type="RefSeq" id="XP_047286396.1">
    <molecule id="Q9NS68-2"/>
    <property type="nucleotide sequence ID" value="XM_047430440.1"/>
</dbReference>
<dbReference type="RefSeq" id="XP_047286397.1">
    <molecule id="Q9NS68-2"/>
    <property type="nucleotide sequence ID" value="XM_047430441.1"/>
</dbReference>
<dbReference type="BioGRID" id="120684">
    <property type="interactions" value="61"/>
</dbReference>
<dbReference type="CORUM" id="Q9NS68"/>
<dbReference type="FunCoup" id="Q9NS68">
    <property type="interactions" value="1045"/>
</dbReference>
<dbReference type="IntAct" id="Q9NS68">
    <property type="interactions" value="49"/>
</dbReference>
<dbReference type="MINT" id="Q9NS68"/>
<dbReference type="STRING" id="9606.ENSP00000371693"/>
<dbReference type="GlyCosmos" id="Q9NS68">
    <property type="glycosylation" value="1 site, No reported glycans"/>
</dbReference>
<dbReference type="GlyGen" id="Q9NS68">
    <property type="glycosylation" value="1 site, 1 N-linked glycan (1 site)"/>
</dbReference>
<dbReference type="iPTMnet" id="Q9NS68"/>
<dbReference type="PhosphoSitePlus" id="Q9NS68"/>
<dbReference type="BioMuta" id="TNFRSF19"/>
<dbReference type="DMDM" id="21264102"/>
<dbReference type="jPOST" id="Q9NS68"/>
<dbReference type="MassIVE" id="Q9NS68"/>
<dbReference type="PaxDb" id="9606-ENSP00000371693"/>
<dbReference type="PeptideAtlas" id="Q9NS68"/>
<dbReference type="ProteomicsDB" id="82498">
    <molecule id="Q9NS68-1"/>
</dbReference>
<dbReference type="ProteomicsDB" id="82499">
    <molecule id="Q9NS68-2"/>
</dbReference>
<dbReference type="Antibodypedia" id="2432">
    <property type="antibodies" value="375 antibodies from 34 providers"/>
</dbReference>
<dbReference type="DNASU" id="55504"/>
<dbReference type="Ensembl" id="ENST00000248484.9">
    <molecule id="Q9NS68-2"/>
    <property type="protein sequence ID" value="ENSP00000248484.4"/>
    <property type="gene ID" value="ENSG00000127863.16"/>
</dbReference>
<dbReference type="Ensembl" id="ENST00000382258.8">
    <molecule id="Q9NS68-1"/>
    <property type="protein sequence ID" value="ENSP00000371693.4"/>
    <property type="gene ID" value="ENSG00000127863.16"/>
</dbReference>
<dbReference type="Ensembl" id="ENST00000382263.3">
    <molecule id="Q9NS68-2"/>
    <property type="protein sequence ID" value="ENSP00000371698.3"/>
    <property type="gene ID" value="ENSG00000127863.16"/>
</dbReference>
<dbReference type="Ensembl" id="ENST00000403372.6">
    <molecule id="Q9NS68-3"/>
    <property type="protein sequence ID" value="ENSP00000385408.2"/>
    <property type="gene ID" value="ENSG00000127863.16"/>
</dbReference>
<dbReference type="GeneID" id="55504"/>
<dbReference type="KEGG" id="hsa:55504"/>
<dbReference type="MANE-Select" id="ENST00000248484.9">
    <molecule id="Q9NS68-2"/>
    <property type="protein sequence ID" value="ENSP00000248484.4"/>
    <property type="RefSeq nucleotide sequence ID" value="NM_148957.4"/>
    <property type="RefSeq protein sequence ID" value="NP_683760.1"/>
</dbReference>
<dbReference type="UCSC" id="uc001uot.4">
    <molecule id="Q9NS68-1"/>
    <property type="organism name" value="human"/>
</dbReference>
<dbReference type="AGR" id="HGNC:11915"/>
<dbReference type="CTD" id="55504"/>
<dbReference type="DisGeNET" id="55504"/>
<dbReference type="GeneCards" id="TNFRSF19"/>
<dbReference type="HGNC" id="HGNC:11915">
    <property type="gene designation" value="TNFRSF19"/>
</dbReference>
<dbReference type="HPA" id="ENSG00000127863">
    <property type="expression patterns" value="Tissue enhanced (salivary gland, skin)"/>
</dbReference>
<dbReference type="MIM" id="606122">
    <property type="type" value="gene"/>
</dbReference>
<dbReference type="neXtProt" id="NX_Q9NS68"/>
<dbReference type="OpenTargets" id="ENSG00000127863"/>
<dbReference type="PharmGKB" id="PA36608"/>
<dbReference type="VEuPathDB" id="HostDB:ENSG00000127863"/>
<dbReference type="eggNOG" id="ENOG502QQHI">
    <property type="taxonomic scope" value="Eukaryota"/>
</dbReference>
<dbReference type="GeneTree" id="ENSGT00940000153259"/>
<dbReference type="HOGENOM" id="CLU_050058_0_0_1"/>
<dbReference type="InParanoid" id="Q9NS68"/>
<dbReference type="OMA" id="KTKCNGT"/>
<dbReference type="OrthoDB" id="10017617at2759"/>
<dbReference type="PAN-GO" id="Q9NS68">
    <property type="GO annotations" value="4 GO annotations based on evolutionary models"/>
</dbReference>
<dbReference type="PhylomeDB" id="Q9NS68"/>
<dbReference type="TreeFam" id="TF331385"/>
<dbReference type="PathwayCommons" id="Q9NS68"/>
<dbReference type="SignaLink" id="Q9NS68"/>
<dbReference type="BioGRID-ORCS" id="55504">
    <property type="hits" value="6 hits in 1143 CRISPR screens"/>
</dbReference>
<dbReference type="ChiTaRS" id="TNFRSF19">
    <property type="organism name" value="human"/>
</dbReference>
<dbReference type="GeneWiki" id="TNFRSF19"/>
<dbReference type="GenomeRNAi" id="55504"/>
<dbReference type="Pharos" id="Q9NS68">
    <property type="development level" value="Tbio"/>
</dbReference>
<dbReference type="PRO" id="PR:Q9NS68"/>
<dbReference type="Proteomes" id="UP000005640">
    <property type="component" value="Chromosome 13"/>
</dbReference>
<dbReference type="RNAct" id="Q9NS68">
    <property type="molecule type" value="protein"/>
</dbReference>
<dbReference type="Bgee" id="ENSG00000127863">
    <property type="expression patterns" value="Expressed in upper arm skin and 159 other cell types or tissues"/>
</dbReference>
<dbReference type="ExpressionAtlas" id="Q9NS68">
    <property type="expression patterns" value="baseline and differential"/>
</dbReference>
<dbReference type="GO" id="GO:0016020">
    <property type="term" value="C:membrane"/>
    <property type="evidence" value="ECO:0000303"/>
    <property type="project" value="UniProtKB"/>
</dbReference>
<dbReference type="GO" id="GO:0005886">
    <property type="term" value="C:plasma membrane"/>
    <property type="evidence" value="ECO:0000318"/>
    <property type="project" value="GO_Central"/>
</dbReference>
<dbReference type="GO" id="GO:0038023">
    <property type="term" value="F:signaling receptor activity"/>
    <property type="evidence" value="ECO:0000318"/>
    <property type="project" value="GO_Central"/>
</dbReference>
<dbReference type="GO" id="GO:0005031">
    <property type="term" value="F:tumor necrosis factor receptor activity"/>
    <property type="evidence" value="ECO:0000303"/>
    <property type="project" value="UniProtKB"/>
</dbReference>
<dbReference type="GO" id="GO:0006915">
    <property type="term" value="P:apoptotic process"/>
    <property type="evidence" value="ECO:0000303"/>
    <property type="project" value="UniProtKB"/>
</dbReference>
<dbReference type="GO" id="GO:0001942">
    <property type="term" value="P:hair follicle development"/>
    <property type="evidence" value="ECO:0007669"/>
    <property type="project" value="Ensembl"/>
</dbReference>
<dbReference type="GO" id="GO:0007254">
    <property type="term" value="P:JNK cascade"/>
    <property type="evidence" value="ECO:0000303"/>
    <property type="project" value="UniProtKB"/>
</dbReference>
<dbReference type="GO" id="GO:0043123">
    <property type="term" value="P:positive regulation of canonical NF-kappaB signal transduction"/>
    <property type="evidence" value="ECO:0000318"/>
    <property type="project" value="GO_Central"/>
</dbReference>
<dbReference type="GO" id="GO:0046330">
    <property type="term" value="P:positive regulation of JNK cascade"/>
    <property type="evidence" value="ECO:0000318"/>
    <property type="project" value="GO_Central"/>
</dbReference>
<dbReference type="CDD" id="cd13418">
    <property type="entry name" value="TNFRSF19"/>
    <property type="match status" value="1"/>
</dbReference>
<dbReference type="FunFam" id="2.10.50.10:FF:000003">
    <property type="entry name" value="Tumor necrosis factor receptor superfamily member 19"/>
    <property type="match status" value="1"/>
</dbReference>
<dbReference type="Gene3D" id="2.10.50.10">
    <property type="entry name" value="Tumor Necrosis Factor Receptor, subunit A, domain 2"/>
    <property type="match status" value="1"/>
</dbReference>
<dbReference type="InterPro" id="IPR001368">
    <property type="entry name" value="TNFR/NGFR_Cys_rich_reg"/>
</dbReference>
<dbReference type="InterPro" id="IPR022342">
    <property type="entry name" value="TNFR_19"/>
</dbReference>
<dbReference type="InterPro" id="IPR034047">
    <property type="entry name" value="TNFRSF19_N"/>
</dbReference>
<dbReference type="InterPro" id="IPR047526">
    <property type="entry name" value="TNR19/27/EDAR"/>
</dbReference>
<dbReference type="PANTHER" id="PTHR12120">
    <property type="entry name" value="TNFR-CYS DOMAIN-CONTAINING PROTEIN"/>
    <property type="match status" value="1"/>
</dbReference>
<dbReference type="PANTHER" id="PTHR12120:SF1">
    <property type="entry name" value="TUMOR NECROSIS FACTOR RECEPTOR SUPERFAMILY MEMBER 19"/>
    <property type="match status" value="1"/>
</dbReference>
<dbReference type="PRINTS" id="PR01969">
    <property type="entry name" value="TNFACTORR19"/>
</dbReference>
<dbReference type="SMART" id="SM00208">
    <property type="entry name" value="TNFR"/>
    <property type="match status" value="2"/>
</dbReference>
<dbReference type="PROSITE" id="PS00652">
    <property type="entry name" value="TNFR_NGFR_1"/>
    <property type="match status" value="2"/>
</dbReference>
<dbReference type="PROSITE" id="PS50050">
    <property type="entry name" value="TNFR_NGFR_2"/>
    <property type="match status" value="1"/>
</dbReference>
<reference key="1">
    <citation type="journal article" date="2000" name="J. Biol. Chem.">
        <title>TAJ, a novel member of the tumor necrosis factor receptor family, activates the c-Jun N-terminal kinase pathway and mediates caspase-independent cell death.</title>
        <authorList>
            <person name="Eby M.T."/>
            <person name="Jasmin A."/>
            <person name="Kumar A."/>
            <person name="Sharma K."/>
            <person name="Chaudhary P.M."/>
        </authorList>
    </citation>
    <scope>NUCLEOTIDE SEQUENCE [MRNA] (ISOFORM 1)</scope>
    <scope>INTERACTION WITH TRAF1; TRAF2; TRAF3 AND TRAF5</scope>
    <source>
        <tissue>Fetal spleen</tissue>
    </source>
</reference>
<reference key="2">
    <citation type="journal article" date="2000" name="J. Biol. Chem.">
        <title>TROY, a newly identified member of the tumor necrosis factor receptor superfamily, exhibits a homology with Edar and is expressed in embryonic skin and hair follicles.</title>
        <authorList>
            <person name="Kojima T."/>
            <person name="Morikawa Y."/>
            <person name="Copeland N.G."/>
            <person name="Gilbert D.J."/>
            <person name="Jenkins N.A."/>
            <person name="Senba E."/>
            <person name="Kitamura T."/>
        </authorList>
    </citation>
    <scope>NUCLEOTIDE SEQUENCE [MRNA] (ISOFORM 1)</scope>
    <source>
        <tissue>Glial tumor</tissue>
    </source>
</reference>
<reference key="3">
    <citation type="submission" date="2000-03" db="EMBL/GenBank/DDBJ databases">
        <title>TRADE, a novel TNF receptor family member associated with death signaling.</title>
        <authorList>
            <person name="Chaudhary D."/>
            <person name="Long A.J."/>
        </authorList>
    </citation>
    <scope>NUCLEOTIDE SEQUENCE [MRNA] (ISOFORMS 1 AND 2)</scope>
    <scope>VARIANTS THR-31 AND ILE-405</scope>
</reference>
<reference key="4">
    <citation type="journal article" date="2003" name="Genome Res.">
        <title>The secreted protein discovery initiative (SPDI), a large-scale effort to identify novel human secreted and transmembrane proteins: a bioinformatics assessment.</title>
        <authorList>
            <person name="Clark H.F."/>
            <person name="Gurney A.L."/>
            <person name="Abaya E."/>
            <person name="Baker K."/>
            <person name="Baldwin D.T."/>
            <person name="Brush J."/>
            <person name="Chen J."/>
            <person name="Chow B."/>
            <person name="Chui C."/>
            <person name="Crowley C."/>
            <person name="Currell B."/>
            <person name="Deuel B."/>
            <person name="Dowd P."/>
            <person name="Eaton D."/>
            <person name="Foster J.S."/>
            <person name="Grimaldi C."/>
            <person name="Gu Q."/>
            <person name="Hass P.E."/>
            <person name="Heldens S."/>
            <person name="Huang A."/>
            <person name="Kim H.S."/>
            <person name="Klimowski L."/>
            <person name="Jin Y."/>
            <person name="Johnson S."/>
            <person name="Lee J."/>
            <person name="Lewis L."/>
            <person name="Liao D."/>
            <person name="Mark M.R."/>
            <person name="Robbie E."/>
            <person name="Sanchez C."/>
            <person name="Schoenfeld J."/>
            <person name="Seshagiri S."/>
            <person name="Simmons L."/>
            <person name="Singh J."/>
            <person name="Smith V."/>
            <person name="Stinson J."/>
            <person name="Vagts A."/>
            <person name="Vandlen R.L."/>
            <person name="Watanabe C."/>
            <person name="Wieand D."/>
            <person name="Woods K."/>
            <person name="Xie M.-H."/>
            <person name="Yansura D.G."/>
            <person name="Yi S."/>
            <person name="Yu G."/>
            <person name="Yuan J."/>
            <person name="Zhang M."/>
            <person name="Zhang Z."/>
            <person name="Goddard A.D."/>
            <person name="Wood W.I."/>
            <person name="Godowski P.J."/>
            <person name="Gray A.M."/>
        </authorList>
    </citation>
    <scope>NUCLEOTIDE SEQUENCE [LARGE SCALE MRNA] (ISOFORM 2)</scope>
</reference>
<reference key="5">
    <citation type="journal article" date="2004" name="Nat. Genet.">
        <title>Complete sequencing and characterization of 21,243 full-length human cDNAs.</title>
        <authorList>
            <person name="Ota T."/>
            <person name="Suzuki Y."/>
            <person name="Nishikawa T."/>
            <person name="Otsuki T."/>
            <person name="Sugiyama T."/>
            <person name="Irie R."/>
            <person name="Wakamatsu A."/>
            <person name="Hayashi K."/>
            <person name="Sato H."/>
            <person name="Nagai K."/>
            <person name="Kimura K."/>
            <person name="Makita H."/>
            <person name="Sekine M."/>
            <person name="Obayashi M."/>
            <person name="Nishi T."/>
            <person name="Shibahara T."/>
            <person name="Tanaka T."/>
            <person name="Ishii S."/>
            <person name="Yamamoto J."/>
            <person name="Saito K."/>
            <person name="Kawai Y."/>
            <person name="Isono Y."/>
            <person name="Nakamura Y."/>
            <person name="Nagahari K."/>
            <person name="Murakami K."/>
            <person name="Yasuda T."/>
            <person name="Iwayanagi T."/>
            <person name="Wagatsuma M."/>
            <person name="Shiratori A."/>
            <person name="Sudo H."/>
            <person name="Hosoiri T."/>
            <person name="Kaku Y."/>
            <person name="Kodaira H."/>
            <person name="Kondo H."/>
            <person name="Sugawara M."/>
            <person name="Takahashi M."/>
            <person name="Kanda K."/>
            <person name="Yokoi T."/>
            <person name="Furuya T."/>
            <person name="Kikkawa E."/>
            <person name="Omura Y."/>
            <person name="Abe K."/>
            <person name="Kamihara K."/>
            <person name="Katsuta N."/>
            <person name="Sato K."/>
            <person name="Tanikawa M."/>
            <person name="Yamazaki M."/>
            <person name="Ninomiya K."/>
            <person name="Ishibashi T."/>
            <person name="Yamashita H."/>
            <person name="Murakawa K."/>
            <person name="Fujimori K."/>
            <person name="Tanai H."/>
            <person name="Kimata M."/>
            <person name="Watanabe M."/>
            <person name="Hiraoka S."/>
            <person name="Chiba Y."/>
            <person name="Ishida S."/>
            <person name="Ono Y."/>
            <person name="Takiguchi S."/>
            <person name="Watanabe S."/>
            <person name="Yosida M."/>
            <person name="Hotuta T."/>
            <person name="Kusano J."/>
            <person name="Kanehori K."/>
            <person name="Takahashi-Fujii A."/>
            <person name="Hara H."/>
            <person name="Tanase T.-O."/>
            <person name="Nomura Y."/>
            <person name="Togiya S."/>
            <person name="Komai F."/>
            <person name="Hara R."/>
            <person name="Takeuchi K."/>
            <person name="Arita M."/>
            <person name="Imose N."/>
            <person name="Musashino K."/>
            <person name="Yuuki H."/>
            <person name="Oshima A."/>
            <person name="Sasaki N."/>
            <person name="Aotsuka S."/>
            <person name="Yoshikawa Y."/>
            <person name="Matsunawa H."/>
            <person name="Ichihara T."/>
            <person name="Shiohata N."/>
            <person name="Sano S."/>
            <person name="Moriya S."/>
            <person name="Momiyama H."/>
            <person name="Satoh N."/>
            <person name="Takami S."/>
            <person name="Terashima Y."/>
            <person name="Suzuki O."/>
            <person name="Nakagawa S."/>
            <person name="Senoh A."/>
            <person name="Mizoguchi H."/>
            <person name="Goto Y."/>
            <person name="Shimizu F."/>
            <person name="Wakebe H."/>
            <person name="Hishigaki H."/>
            <person name="Watanabe T."/>
            <person name="Sugiyama A."/>
            <person name="Takemoto M."/>
            <person name="Kawakami B."/>
            <person name="Yamazaki M."/>
            <person name="Watanabe K."/>
            <person name="Kumagai A."/>
            <person name="Itakura S."/>
            <person name="Fukuzumi Y."/>
            <person name="Fujimori Y."/>
            <person name="Komiyama M."/>
            <person name="Tashiro H."/>
            <person name="Tanigami A."/>
            <person name="Fujiwara T."/>
            <person name="Ono T."/>
            <person name="Yamada K."/>
            <person name="Fujii Y."/>
            <person name="Ozaki K."/>
            <person name="Hirao M."/>
            <person name="Ohmori Y."/>
            <person name="Kawabata A."/>
            <person name="Hikiji T."/>
            <person name="Kobatake N."/>
            <person name="Inagaki H."/>
            <person name="Ikema Y."/>
            <person name="Okamoto S."/>
            <person name="Okitani R."/>
            <person name="Kawakami T."/>
            <person name="Noguchi S."/>
            <person name="Itoh T."/>
            <person name="Shigeta K."/>
            <person name="Senba T."/>
            <person name="Matsumura K."/>
            <person name="Nakajima Y."/>
            <person name="Mizuno T."/>
            <person name="Morinaga M."/>
            <person name="Sasaki M."/>
            <person name="Togashi T."/>
            <person name="Oyama M."/>
            <person name="Hata H."/>
            <person name="Watanabe M."/>
            <person name="Komatsu T."/>
            <person name="Mizushima-Sugano J."/>
            <person name="Satoh T."/>
            <person name="Shirai Y."/>
            <person name="Takahashi Y."/>
            <person name="Nakagawa K."/>
            <person name="Okumura K."/>
            <person name="Nagase T."/>
            <person name="Nomura N."/>
            <person name="Kikuchi H."/>
            <person name="Masuho Y."/>
            <person name="Yamashita R."/>
            <person name="Nakai K."/>
            <person name="Yada T."/>
            <person name="Nakamura Y."/>
            <person name="Ohara O."/>
            <person name="Isogai T."/>
            <person name="Sugano S."/>
        </authorList>
    </citation>
    <scope>NUCLEOTIDE SEQUENCE [LARGE SCALE MRNA] (ISOFORM 3)</scope>
    <scope>VARIANTS VAL-159 AND ILE-405</scope>
    <source>
        <tissue>Trachea</tissue>
    </source>
</reference>
<reference key="6">
    <citation type="journal article" date="2004" name="Nature">
        <title>The DNA sequence and analysis of human chromosome 13.</title>
        <authorList>
            <person name="Dunham A."/>
            <person name="Matthews L.H."/>
            <person name="Burton J."/>
            <person name="Ashurst J.L."/>
            <person name="Howe K.L."/>
            <person name="Ashcroft K.J."/>
            <person name="Beare D.M."/>
            <person name="Burford D.C."/>
            <person name="Hunt S.E."/>
            <person name="Griffiths-Jones S."/>
            <person name="Jones M.C."/>
            <person name="Keenan S.J."/>
            <person name="Oliver K."/>
            <person name="Scott C.E."/>
            <person name="Ainscough R."/>
            <person name="Almeida J.P."/>
            <person name="Ambrose K.D."/>
            <person name="Andrews D.T."/>
            <person name="Ashwell R.I.S."/>
            <person name="Babbage A.K."/>
            <person name="Bagguley C.L."/>
            <person name="Bailey J."/>
            <person name="Bannerjee R."/>
            <person name="Barlow K.F."/>
            <person name="Bates K."/>
            <person name="Beasley H."/>
            <person name="Bird C.P."/>
            <person name="Bray-Allen S."/>
            <person name="Brown A.J."/>
            <person name="Brown J.Y."/>
            <person name="Burrill W."/>
            <person name="Carder C."/>
            <person name="Carter N.P."/>
            <person name="Chapman J.C."/>
            <person name="Clamp M.E."/>
            <person name="Clark S.Y."/>
            <person name="Clarke G."/>
            <person name="Clee C.M."/>
            <person name="Clegg S.C."/>
            <person name="Cobley V."/>
            <person name="Collins J.E."/>
            <person name="Corby N."/>
            <person name="Coville G.J."/>
            <person name="Deloukas P."/>
            <person name="Dhami P."/>
            <person name="Dunham I."/>
            <person name="Dunn M."/>
            <person name="Earthrowl M.E."/>
            <person name="Ellington A.G."/>
            <person name="Faulkner L."/>
            <person name="Frankish A.G."/>
            <person name="Frankland J."/>
            <person name="French L."/>
            <person name="Garner P."/>
            <person name="Garnett J."/>
            <person name="Gilbert J.G.R."/>
            <person name="Gilson C.J."/>
            <person name="Ghori J."/>
            <person name="Grafham D.V."/>
            <person name="Gribble S.M."/>
            <person name="Griffiths C."/>
            <person name="Hall R.E."/>
            <person name="Hammond S."/>
            <person name="Harley J.L."/>
            <person name="Hart E.A."/>
            <person name="Heath P.D."/>
            <person name="Howden P.J."/>
            <person name="Huckle E.J."/>
            <person name="Hunt P.J."/>
            <person name="Hunt A.R."/>
            <person name="Johnson C."/>
            <person name="Johnson D."/>
            <person name="Kay M."/>
            <person name="Kimberley A.M."/>
            <person name="King A."/>
            <person name="Laird G.K."/>
            <person name="Langford C.J."/>
            <person name="Lawlor S."/>
            <person name="Leongamornlert D.A."/>
            <person name="Lloyd D.M."/>
            <person name="Lloyd C."/>
            <person name="Loveland J.E."/>
            <person name="Lovell J."/>
            <person name="Martin S."/>
            <person name="Mashreghi-Mohammadi M."/>
            <person name="McLaren S.J."/>
            <person name="McMurray A."/>
            <person name="Milne S."/>
            <person name="Moore M.J.F."/>
            <person name="Nickerson T."/>
            <person name="Palmer S.A."/>
            <person name="Pearce A.V."/>
            <person name="Peck A.I."/>
            <person name="Pelan S."/>
            <person name="Phillimore B."/>
            <person name="Porter K.M."/>
            <person name="Rice C.M."/>
            <person name="Searle S."/>
            <person name="Sehra H.K."/>
            <person name="Shownkeen R."/>
            <person name="Skuce C.D."/>
            <person name="Smith M."/>
            <person name="Steward C.A."/>
            <person name="Sycamore N."/>
            <person name="Tester J."/>
            <person name="Thomas D.W."/>
            <person name="Tracey A."/>
            <person name="Tromans A."/>
            <person name="Tubby B."/>
            <person name="Wall M."/>
            <person name="Wallis J.M."/>
            <person name="West A.P."/>
            <person name="Whitehead S.L."/>
            <person name="Willey D.L."/>
            <person name="Wilming L."/>
            <person name="Wray P.W."/>
            <person name="Wright M.W."/>
            <person name="Young L."/>
            <person name="Coulson A."/>
            <person name="Durbin R.M."/>
            <person name="Hubbard T."/>
            <person name="Sulston J.E."/>
            <person name="Beck S."/>
            <person name="Bentley D.R."/>
            <person name="Rogers J."/>
            <person name="Ross M.T."/>
        </authorList>
    </citation>
    <scope>NUCLEOTIDE SEQUENCE [LARGE SCALE GENOMIC DNA]</scope>
</reference>
<reference key="7">
    <citation type="submission" date="2005-07" db="EMBL/GenBank/DDBJ databases">
        <authorList>
            <person name="Mural R.J."/>
            <person name="Istrail S."/>
            <person name="Sutton G.G."/>
            <person name="Florea L."/>
            <person name="Halpern A.L."/>
            <person name="Mobarry C.M."/>
            <person name="Lippert R."/>
            <person name="Walenz B."/>
            <person name="Shatkay H."/>
            <person name="Dew I."/>
            <person name="Miller J.R."/>
            <person name="Flanigan M.J."/>
            <person name="Edwards N.J."/>
            <person name="Bolanos R."/>
            <person name="Fasulo D."/>
            <person name="Halldorsson B.V."/>
            <person name="Hannenhalli S."/>
            <person name="Turner R."/>
            <person name="Yooseph S."/>
            <person name="Lu F."/>
            <person name="Nusskern D.R."/>
            <person name="Shue B.C."/>
            <person name="Zheng X.H."/>
            <person name="Zhong F."/>
            <person name="Delcher A.L."/>
            <person name="Huson D.H."/>
            <person name="Kravitz S.A."/>
            <person name="Mouchard L."/>
            <person name="Reinert K."/>
            <person name="Remington K.A."/>
            <person name="Clark A.G."/>
            <person name="Waterman M.S."/>
            <person name="Eichler E.E."/>
            <person name="Adams M.D."/>
            <person name="Hunkapiller M.W."/>
            <person name="Myers E.W."/>
            <person name="Venter J.C."/>
        </authorList>
    </citation>
    <scope>NUCLEOTIDE SEQUENCE [LARGE SCALE GENOMIC DNA]</scope>
</reference>
<reference key="8">
    <citation type="journal article" date="2004" name="Genome Res.">
        <title>The status, quality, and expansion of the NIH full-length cDNA project: the Mammalian Gene Collection (MGC).</title>
        <authorList>
            <consortium name="The MGC Project Team"/>
        </authorList>
    </citation>
    <scope>NUCLEOTIDE SEQUENCE [LARGE SCALE MRNA] (ISOFORM 2)</scope>
    <source>
        <tissue>Brain</tissue>
    </source>
</reference>
<reference key="9">
    <citation type="journal article" date="2004" name="Protein Sci.">
        <title>Signal peptide prediction based on analysis of experimentally verified cleavage sites.</title>
        <authorList>
            <person name="Zhang Z."/>
            <person name="Henzel W.J."/>
        </authorList>
    </citation>
    <scope>PROTEIN SEQUENCE OF 30-44</scope>
</reference>
<reference key="10">
    <citation type="journal article" date="2005" name="Neuron">
        <title>A TNF receptor family member, TROY, is a coreceptor with Nogo receptor in mediating the inhibitory activity of myelin inhibitors.</title>
        <authorList>
            <person name="Park J.B."/>
            <person name="Yiu G."/>
            <person name="Kaneko S."/>
            <person name="Wang J."/>
            <person name="Chang J."/>
            <person name="He X.L."/>
            <person name="Garcia K.C."/>
            <person name="He Z."/>
        </authorList>
    </citation>
    <scope>INTERACTION WITH LINGO1</scope>
</reference>
<keyword id="KW-0025">Alternative splicing</keyword>
<keyword id="KW-0053">Apoptosis</keyword>
<keyword id="KW-0903">Direct protein sequencing</keyword>
<keyword id="KW-1015">Disulfide bond</keyword>
<keyword id="KW-0325">Glycoprotein</keyword>
<keyword id="KW-0472">Membrane</keyword>
<keyword id="KW-1267">Proteomics identification</keyword>
<keyword id="KW-0675">Receptor</keyword>
<keyword id="KW-1185">Reference proteome</keyword>
<keyword id="KW-0677">Repeat</keyword>
<keyword id="KW-0732">Signal</keyword>
<keyword id="KW-0812">Transmembrane</keyword>
<keyword id="KW-1133">Transmembrane helix</keyword>
<comment type="function">
    <text>Can mediate activation of JNK and NF-kappa-B. May promote caspase-independent cell death.</text>
</comment>
<comment type="subunit">
    <text evidence="3 6">Associates with TRAF1, TRAF2, TRAF3 and TRAF5. Interacts with LINGO1.</text>
</comment>
<comment type="interaction">
    <interactant intactId="EBI-530381">
        <id>Q9NS68</id>
    </interactant>
    <interactant intactId="EBI-712693">
        <id>P52565</id>
        <label>ARHGDIA</label>
    </interactant>
    <organismsDiffer>false</organismsDiffer>
    <experiments>3</experiments>
</comment>
<comment type="interaction">
    <interactant intactId="EBI-530381">
        <id>Q9NS68</id>
    </interactant>
    <interactant intactId="EBI-716384">
        <id>P30086</id>
        <label>PEBP1</label>
    </interactant>
    <organismsDiffer>false</organismsDiffer>
    <experiments>4</experiments>
</comment>
<comment type="interaction">
    <interactant intactId="EBI-530381">
        <id>Q9NS68</id>
    </interactant>
    <interactant intactId="EBI-354213">
        <id>P35232</id>
        <label>PHB1</label>
    </interactant>
    <organismsDiffer>false</organismsDiffer>
    <experiments>3</experiments>
</comment>
<comment type="interaction">
    <interactant intactId="EBI-12089038">
        <id>Q9NS68-2</id>
    </interactant>
    <interactant intactId="EBI-6166686">
        <id>Q96F15</id>
        <label>GIMAP5</label>
    </interactant>
    <organismsDiffer>false</organismsDiffer>
    <experiments>3</experiments>
</comment>
<comment type="interaction">
    <interactant intactId="EBI-12089038">
        <id>Q9NS68-2</id>
    </interactant>
    <interactant intactId="EBI-11980301">
        <id>Q8N3F0</id>
        <label>MTURN</label>
    </interactant>
    <organismsDiffer>false</organismsDiffer>
    <experiments>3</experiments>
</comment>
<comment type="interaction">
    <interactant intactId="EBI-12089038">
        <id>Q9NS68-2</id>
    </interactant>
    <interactant intactId="EBI-347996">
        <id>O43765</id>
        <label>SGTA</label>
    </interactant>
    <organismsDiffer>false</organismsDiffer>
    <experiments>3</experiments>
</comment>
<comment type="interaction">
    <interactant intactId="EBI-12089038">
        <id>Q9NS68-2</id>
    </interactant>
    <interactant intactId="EBI-744081">
        <id>Q96EQ0</id>
        <label>SGTB</label>
    </interactant>
    <organismsDiffer>false</organismsDiffer>
    <experiments>3</experiments>
</comment>
<comment type="subcellular location">
    <subcellularLocation>
        <location evidence="12">Membrane</location>
        <topology evidence="12">Single-pass type I membrane protein</topology>
    </subcellularLocation>
</comment>
<comment type="alternative products">
    <event type="alternative splicing"/>
    <isoform>
        <id>Q9NS68-1</id>
        <name>1</name>
        <name>TAJ-alpha</name>
        <name>TRADEalpha</name>
        <sequence type="displayed"/>
    </isoform>
    <isoform>
        <id>Q9NS68-2</id>
        <name>2</name>
        <name>TRADEbeta</name>
        <sequence type="described" ref="VSP_006512"/>
    </isoform>
    <isoform>
        <id>Q9NS68-3</id>
        <name>3</name>
        <sequence type="described" ref="VSP_044886 VSP_006512"/>
    </isoform>
</comment>
<comment type="tissue specificity">
    <text>Highly expressed in prostate. Detected at lower levels in thymus, spleen, testis, uterus, small intestine, colon and peripheral blood leukocytes.</text>
</comment>